<gene>
    <name evidence="1" type="primary">lexA</name>
    <name type="ordered locus">AZOSEA17370</name>
    <name type="ORF">ebA3086</name>
</gene>
<proteinExistence type="inferred from homology"/>
<protein>
    <recommendedName>
        <fullName evidence="1">LexA repressor</fullName>
        <ecNumber evidence="1">3.4.21.88</ecNumber>
    </recommendedName>
</protein>
<sequence>MISRADPLTARQAEILDFIRHTVESEGRPPTRAEICTAFGFRSPNAAETHLRTLAAKGAIVLEEGRARGIRLVEALGLPLVGHVAAGRPMLAVEHIEARYQIDSALFSPRADYLLRVRGMSMRDAGIIDSDLLAVHRTPQVRAGQVVVARLEDEVTVKTFTREGPIVRLLPANPDFEPIVVDTRHQALDIEGIAVGLVRNGSR</sequence>
<keyword id="KW-0068">Autocatalytic cleavage</keyword>
<keyword id="KW-0227">DNA damage</keyword>
<keyword id="KW-0234">DNA repair</keyword>
<keyword id="KW-0235">DNA replication</keyword>
<keyword id="KW-0238">DNA-binding</keyword>
<keyword id="KW-0378">Hydrolase</keyword>
<keyword id="KW-1185">Reference proteome</keyword>
<keyword id="KW-0678">Repressor</keyword>
<keyword id="KW-0742">SOS response</keyword>
<keyword id="KW-0804">Transcription</keyword>
<keyword id="KW-0805">Transcription regulation</keyword>
<reference key="1">
    <citation type="journal article" date="2005" name="Arch. Microbiol.">
        <title>The genome sequence of an anaerobic aromatic-degrading denitrifying bacterium, strain EbN1.</title>
        <authorList>
            <person name="Rabus R."/>
            <person name="Kube M."/>
            <person name="Heider J."/>
            <person name="Beck A."/>
            <person name="Heitmann K."/>
            <person name="Widdel F."/>
            <person name="Reinhardt R."/>
        </authorList>
    </citation>
    <scope>NUCLEOTIDE SEQUENCE [LARGE SCALE GENOMIC DNA]</scope>
    <source>
        <strain>DSM 19018 / LMG 30748 / EbN1</strain>
    </source>
</reference>
<organism>
    <name type="scientific">Aromatoleum aromaticum (strain DSM 19018 / LMG 30748 / EbN1)</name>
    <name type="common">Azoarcus sp. (strain EbN1)</name>
    <dbReference type="NCBI Taxonomy" id="76114"/>
    <lineage>
        <taxon>Bacteria</taxon>
        <taxon>Pseudomonadati</taxon>
        <taxon>Pseudomonadota</taxon>
        <taxon>Betaproteobacteria</taxon>
        <taxon>Rhodocyclales</taxon>
        <taxon>Rhodocyclaceae</taxon>
        <taxon>Aromatoleum</taxon>
    </lineage>
</organism>
<accession>Q5P4A1</accession>
<name>LEXA_AROAE</name>
<evidence type="ECO:0000255" key="1">
    <source>
        <dbReference type="HAMAP-Rule" id="MF_00015"/>
    </source>
</evidence>
<dbReference type="EC" id="3.4.21.88" evidence="1"/>
<dbReference type="EMBL" id="CR555306">
    <property type="protein sequence ID" value="CAI07862.1"/>
    <property type="molecule type" value="Genomic_DNA"/>
</dbReference>
<dbReference type="RefSeq" id="WP_011237576.1">
    <property type="nucleotide sequence ID" value="NC_006513.1"/>
</dbReference>
<dbReference type="SMR" id="Q5P4A1"/>
<dbReference type="STRING" id="76114.ebA3086"/>
<dbReference type="MEROPS" id="S24.001"/>
<dbReference type="KEGG" id="eba:ebA3086"/>
<dbReference type="eggNOG" id="COG1974">
    <property type="taxonomic scope" value="Bacteria"/>
</dbReference>
<dbReference type="HOGENOM" id="CLU_066192_45_3_4"/>
<dbReference type="OrthoDB" id="9802364at2"/>
<dbReference type="Proteomes" id="UP000006552">
    <property type="component" value="Chromosome"/>
</dbReference>
<dbReference type="GO" id="GO:0003677">
    <property type="term" value="F:DNA binding"/>
    <property type="evidence" value="ECO:0007669"/>
    <property type="project" value="UniProtKB-UniRule"/>
</dbReference>
<dbReference type="GO" id="GO:0004252">
    <property type="term" value="F:serine-type endopeptidase activity"/>
    <property type="evidence" value="ECO:0007669"/>
    <property type="project" value="UniProtKB-UniRule"/>
</dbReference>
<dbReference type="GO" id="GO:0006281">
    <property type="term" value="P:DNA repair"/>
    <property type="evidence" value="ECO:0007669"/>
    <property type="project" value="UniProtKB-UniRule"/>
</dbReference>
<dbReference type="GO" id="GO:0006260">
    <property type="term" value="P:DNA replication"/>
    <property type="evidence" value="ECO:0007669"/>
    <property type="project" value="UniProtKB-UniRule"/>
</dbReference>
<dbReference type="GO" id="GO:0045892">
    <property type="term" value="P:negative regulation of DNA-templated transcription"/>
    <property type="evidence" value="ECO:0007669"/>
    <property type="project" value="UniProtKB-UniRule"/>
</dbReference>
<dbReference type="GO" id="GO:0006508">
    <property type="term" value="P:proteolysis"/>
    <property type="evidence" value="ECO:0007669"/>
    <property type="project" value="InterPro"/>
</dbReference>
<dbReference type="GO" id="GO:0009432">
    <property type="term" value="P:SOS response"/>
    <property type="evidence" value="ECO:0007669"/>
    <property type="project" value="UniProtKB-UniRule"/>
</dbReference>
<dbReference type="CDD" id="cd06529">
    <property type="entry name" value="S24_LexA-like"/>
    <property type="match status" value="1"/>
</dbReference>
<dbReference type="FunFam" id="1.10.10.10:FF:000009">
    <property type="entry name" value="LexA repressor"/>
    <property type="match status" value="1"/>
</dbReference>
<dbReference type="FunFam" id="2.10.109.10:FF:000001">
    <property type="entry name" value="LexA repressor"/>
    <property type="match status" value="1"/>
</dbReference>
<dbReference type="Gene3D" id="2.10.109.10">
    <property type="entry name" value="Umud Fragment, subunit A"/>
    <property type="match status" value="1"/>
</dbReference>
<dbReference type="Gene3D" id="1.10.10.10">
    <property type="entry name" value="Winged helix-like DNA-binding domain superfamily/Winged helix DNA-binding domain"/>
    <property type="match status" value="1"/>
</dbReference>
<dbReference type="HAMAP" id="MF_00015">
    <property type="entry name" value="LexA"/>
    <property type="match status" value="1"/>
</dbReference>
<dbReference type="InterPro" id="IPR006200">
    <property type="entry name" value="LexA"/>
</dbReference>
<dbReference type="InterPro" id="IPR039418">
    <property type="entry name" value="LexA-like"/>
</dbReference>
<dbReference type="InterPro" id="IPR036286">
    <property type="entry name" value="LexA/Signal_pep-like_sf"/>
</dbReference>
<dbReference type="InterPro" id="IPR006199">
    <property type="entry name" value="LexA_DNA-bd_dom"/>
</dbReference>
<dbReference type="InterPro" id="IPR050077">
    <property type="entry name" value="LexA_repressor"/>
</dbReference>
<dbReference type="InterPro" id="IPR006197">
    <property type="entry name" value="Peptidase_S24_LexA"/>
</dbReference>
<dbReference type="InterPro" id="IPR015927">
    <property type="entry name" value="Peptidase_S24_S26A/B/C"/>
</dbReference>
<dbReference type="InterPro" id="IPR036388">
    <property type="entry name" value="WH-like_DNA-bd_sf"/>
</dbReference>
<dbReference type="InterPro" id="IPR036390">
    <property type="entry name" value="WH_DNA-bd_sf"/>
</dbReference>
<dbReference type="NCBIfam" id="TIGR00498">
    <property type="entry name" value="lexA"/>
    <property type="match status" value="1"/>
</dbReference>
<dbReference type="PANTHER" id="PTHR33516">
    <property type="entry name" value="LEXA REPRESSOR"/>
    <property type="match status" value="1"/>
</dbReference>
<dbReference type="PANTHER" id="PTHR33516:SF2">
    <property type="entry name" value="LEXA REPRESSOR-RELATED"/>
    <property type="match status" value="1"/>
</dbReference>
<dbReference type="Pfam" id="PF01726">
    <property type="entry name" value="LexA_DNA_bind"/>
    <property type="match status" value="1"/>
</dbReference>
<dbReference type="Pfam" id="PF00717">
    <property type="entry name" value="Peptidase_S24"/>
    <property type="match status" value="1"/>
</dbReference>
<dbReference type="PRINTS" id="PR00726">
    <property type="entry name" value="LEXASERPTASE"/>
</dbReference>
<dbReference type="SUPFAM" id="SSF51306">
    <property type="entry name" value="LexA/Signal peptidase"/>
    <property type="match status" value="1"/>
</dbReference>
<dbReference type="SUPFAM" id="SSF46785">
    <property type="entry name" value="Winged helix' DNA-binding domain"/>
    <property type="match status" value="1"/>
</dbReference>
<comment type="function">
    <text evidence="1">Represses a number of genes involved in the response to DNA damage (SOS response), including recA and lexA. In the presence of single-stranded DNA, RecA interacts with LexA causing an autocatalytic cleavage which disrupts the DNA-binding part of LexA, leading to derepression of the SOS regulon and eventually DNA repair.</text>
</comment>
<comment type="catalytic activity">
    <reaction evidence="1">
        <text>Hydrolysis of Ala-|-Gly bond in repressor LexA.</text>
        <dbReference type="EC" id="3.4.21.88"/>
    </reaction>
</comment>
<comment type="subunit">
    <text evidence="1">Homodimer.</text>
</comment>
<comment type="similarity">
    <text evidence="1">Belongs to the peptidase S24 family.</text>
</comment>
<feature type="chain" id="PRO_0000170001" description="LexA repressor">
    <location>
        <begin position="1"/>
        <end position="203"/>
    </location>
</feature>
<feature type="DNA-binding region" description="H-T-H motif" evidence="1">
    <location>
        <begin position="32"/>
        <end position="52"/>
    </location>
</feature>
<feature type="active site" description="For autocatalytic cleavage activity" evidence="1">
    <location>
        <position position="121"/>
    </location>
</feature>
<feature type="active site" description="For autocatalytic cleavage activity" evidence="1">
    <location>
        <position position="158"/>
    </location>
</feature>
<feature type="site" description="Cleavage; by autolysis" evidence="1">
    <location>
        <begin position="86"/>
        <end position="87"/>
    </location>
</feature>